<organism>
    <name type="scientific">Staphylococcus epidermidis (strain ATCC 35984 / DSM 28319 / BCRC 17069 / CCUG 31568 / BM 3577 / RP62A)</name>
    <dbReference type="NCBI Taxonomy" id="176279"/>
    <lineage>
        <taxon>Bacteria</taxon>
        <taxon>Bacillati</taxon>
        <taxon>Bacillota</taxon>
        <taxon>Bacilli</taxon>
        <taxon>Bacillales</taxon>
        <taxon>Staphylococcaceae</taxon>
        <taxon>Staphylococcus</taxon>
    </lineage>
</organism>
<gene>
    <name evidence="1" type="primary">rsmG</name>
    <name type="ordered locus">SERP0005</name>
</gene>
<sequence length="239" mass="27138">MSIEWLSEKLSEQGIELSNTQKEQFQKYYKLLVEWNKKMNLTSITDEHDVYLKHFYDSIAPSFYYDFNGQLSLCDIGAGAGFPSIPLKIVYPELKVTIVDSLNKRIQFLNHLAAELGLEDVSFVHDRAEIYGKGVYRESYDIVTARAVARLTVLSELCLPLVKKGGQFLALKSSKGEEELQEATFAINILGGNVKETHTFELPENAGERQMIIIDKRRQTSKKYPRKPGTPNKSPLVES</sequence>
<name>RSMG_STAEQ</name>
<keyword id="KW-0963">Cytoplasm</keyword>
<keyword id="KW-0489">Methyltransferase</keyword>
<keyword id="KW-1185">Reference proteome</keyword>
<keyword id="KW-0698">rRNA processing</keyword>
<keyword id="KW-0949">S-adenosyl-L-methionine</keyword>
<keyword id="KW-0808">Transferase</keyword>
<feature type="chain" id="PRO_0000184335" description="Ribosomal RNA small subunit methyltransferase G">
    <location>
        <begin position="1"/>
        <end position="239"/>
    </location>
</feature>
<feature type="region of interest" description="Disordered" evidence="2">
    <location>
        <begin position="216"/>
        <end position="239"/>
    </location>
</feature>
<feature type="binding site" evidence="1">
    <location>
        <position position="77"/>
    </location>
    <ligand>
        <name>S-adenosyl-L-methionine</name>
        <dbReference type="ChEBI" id="CHEBI:59789"/>
    </ligand>
</feature>
<feature type="binding site" evidence="1">
    <location>
        <position position="82"/>
    </location>
    <ligand>
        <name>S-adenosyl-L-methionine</name>
        <dbReference type="ChEBI" id="CHEBI:59789"/>
    </ligand>
</feature>
<feature type="binding site" evidence="1">
    <location>
        <begin position="128"/>
        <end position="129"/>
    </location>
    <ligand>
        <name>S-adenosyl-L-methionine</name>
        <dbReference type="ChEBI" id="CHEBI:59789"/>
    </ligand>
</feature>
<feature type="binding site" evidence="1">
    <location>
        <position position="146"/>
    </location>
    <ligand>
        <name>S-adenosyl-L-methionine</name>
        <dbReference type="ChEBI" id="CHEBI:59789"/>
    </ligand>
</feature>
<reference key="1">
    <citation type="journal article" date="2005" name="J. Bacteriol.">
        <title>Insights on evolution of virulence and resistance from the complete genome analysis of an early methicillin-resistant Staphylococcus aureus strain and a biofilm-producing methicillin-resistant Staphylococcus epidermidis strain.</title>
        <authorList>
            <person name="Gill S.R."/>
            <person name="Fouts D.E."/>
            <person name="Archer G.L."/>
            <person name="Mongodin E.F."/>
            <person name="DeBoy R.T."/>
            <person name="Ravel J."/>
            <person name="Paulsen I.T."/>
            <person name="Kolonay J.F."/>
            <person name="Brinkac L.M."/>
            <person name="Beanan M.J."/>
            <person name="Dodson R.J."/>
            <person name="Daugherty S.C."/>
            <person name="Madupu R."/>
            <person name="Angiuoli S.V."/>
            <person name="Durkin A.S."/>
            <person name="Haft D.H."/>
            <person name="Vamathevan J.J."/>
            <person name="Khouri H."/>
            <person name="Utterback T.R."/>
            <person name="Lee C."/>
            <person name="Dimitrov G."/>
            <person name="Jiang L."/>
            <person name="Qin H."/>
            <person name="Weidman J."/>
            <person name="Tran K."/>
            <person name="Kang K.H."/>
            <person name="Hance I.R."/>
            <person name="Nelson K.E."/>
            <person name="Fraser C.M."/>
        </authorList>
    </citation>
    <scope>NUCLEOTIDE SEQUENCE [LARGE SCALE GENOMIC DNA]</scope>
    <source>
        <strain>ATCC 35984 / DSM 28319 / BCRC 17069 / CCUG 31568 / BM 3577 / RP62A</strain>
    </source>
</reference>
<dbReference type="EC" id="2.1.1.-" evidence="1"/>
<dbReference type="EMBL" id="CP000029">
    <property type="protein sequence ID" value="AAW53390.1"/>
    <property type="molecule type" value="Genomic_DNA"/>
</dbReference>
<dbReference type="RefSeq" id="WP_001831748.1">
    <property type="nucleotide sequence ID" value="NC_002976.3"/>
</dbReference>
<dbReference type="SMR" id="Q5HS34"/>
<dbReference type="STRING" id="176279.SERP0005"/>
<dbReference type="KEGG" id="ser:SERP0005"/>
<dbReference type="eggNOG" id="COG0357">
    <property type="taxonomic scope" value="Bacteria"/>
</dbReference>
<dbReference type="HOGENOM" id="CLU_065341_0_0_9"/>
<dbReference type="Proteomes" id="UP000000531">
    <property type="component" value="Chromosome"/>
</dbReference>
<dbReference type="GO" id="GO:0005829">
    <property type="term" value="C:cytosol"/>
    <property type="evidence" value="ECO:0007669"/>
    <property type="project" value="TreeGrafter"/>
</dbReference>
<dbReference type="GO" id="GO:0070043">
    <property type="term" value="F:rRNA (guanine-N7-)-methyltransferase activity"/>
    <property type="evidence" value="ECO:0007669"/>
    <property type="project" value="UniProtKB-UniRule"/>
</dbReference>
<dbReference type="CDD" id="cd02440">
    <property type="entry name" value="AdoMet_MTases"/>
    <property type="match status" value="1"/>
</dbReference>
<dbReference type="FunFam" id="3.40.50.150:FF:000041">
    <property type="entry name" value="Ribosomal RNA small subunit methyltransferase G"/>
    <property type="match status" value="1"/>
</dbReference>
<dbReference type="Gene3D" id="3.40.50.150">
    <property type="entry name" value="Vaccinia Virus protein VP39"/>
    <property type="match status" value="1"/>
</dbReference>
<dbReference type="HAMAP" id="MF_00074">
    <property type="entry name" value="16SrRNA_methyltr_G"/>
    <property type="match status" value="1"/>
</dbReference>
<dbReference type="InterPro" id="IPR003682">
    <property type="entry name" value="rRNA_ssu_MeTfrase_G"/>
</dbReference>
<dbReference type="InterPro" id="IPR029063">
    <property type="entry name" value="SAM-dependent_MTases_sf"/>
</dbReference>
<dbReference type="NCBIfam" id="TIGR00138">
    <property type="entry name" value="rsmG_gidB"/>
    <property type="match status" value="1"/>
</dbReference>
<dbReference type="PANTHER" id="PTHR31760">
    <property type="entry name" value="S-ADENOSYL-L-METHIONINE-DEPENDENT METHYLTRANSFERASES SUPERFAMILY PROTEIN"/>
    <property type="match status" value="1"/>
</dbReference>
<dbReference type="PANTHER" id="PTHR31760:SF0">
    <property type="entry name" value="S-ADENOSYL-L-METHIONINE-DEPENDENT METHYLTRANSFERASES SUPERFAMILY PROTEIN"/>
    <property type="match status" value="1"/>
</dbReference>
<dbReference type="Pfam" id="PF02527">
    <property type="entry name" value="GidB"/>
    <property type="match status" value="1"/>
</dbReference>
<dbReference type="PIRSF" id="PIRSF003078">
    <property type="entry name" value="GidB"/>
    <property type="match status" value="1"/>
</dbReference>
<dbReference type="SUPFAM" id="SSF53335">
    <property type="entry name" value="S-adenosyl-L-methionine-dependent methyltransferases"/>
    <property type="match status" value="1"/>
</dbReference>
<evidence type="ECO:0000255" key="1">
    <source>
        <dbReference type="HAMAP-Rule" id="MF_00074"/>
    </source>
</evidence>
<evidence type="ECO:0000256" key="2">
    <source>
        <dbReference type="SAM" id="MobiDB-lite"/>
    </source>
</evidence>
<protein>
    <recommendedName>
        <fullName evidence="1">Ribosomal RNA small subunit methyltransferase G</fullName>
        <ecNumber evidence="1">2.1.1.-</ecNumber>
    </recommendedName>
    <alternativeName>
        <fullName evidence="1">16S rRNA 7-methylguanosine methyltransferase</fullName>
        <shortName evidence="1">16S rRNA m7G methyltransferase</shortName>
    </alternativeName>
</protein>
<accession>Q5HS34</accession>
<proteinExistence type="inferred from homology"/>
<comment type="function">
    <text evidence="1">Specifically methylates the N7 position of guanine in position 535 of 16S rRNA.</text>
</comment>
<comment type="subcellular location">
    <subcellularLocation>
        <location evidence="1">Cytoplasm</location>
    </subcellularLocation>
</comment>
<comment type="similarity">
    <text evidence="1">Belongs to the methyltransferase superfamily. RNA methyltransferase RsmG family.</text>
</comment>